<gene>
    <name type="ORF">80A10.210</name>
    <name type="ORF">NCU04584</name>
</gene>
<protein>
    <recommendedName>
        <fullName>Putative RNA polymerase II transcriptional coactivator</fullName>
    </recommendedName>
</protein>
<dbReference type="EMBL" id="BX294012">
    <property type="protein sequence ID" value="CAD70778.1"/>
    <property type="molecule type" value="Genomic_DNA"/>
</dbReference>
<dbReference type="EMBL" id="CM002240">
    <property type="protein sequence ID" value="EAA29049.1"/>
    <property type="molecule type" value="Genomic_DNA"/>
</dbReference>
<dbReference type="RefSeq" id="XP_958285.1">
    <property type="nucleotide sequence ID" value="XM_953192.2"/>
</dbReference>
<dbReference type="SMR" id="Q872F4"/>
<dbReference type="STRING" id="367110.Q872F4"/>
<dbReference type="PaxDb" id="5141-EFNCRP00000005838"/>
<dbReference type="EnsemblFungi" id="EAA29049">
    <property type="protein sequence ID" value="EAA29049"/>
    <property type="gene ID" value="NCU04584"/>
</dbReference>
<dbReference type="GeneID" id="3874432"/>
<dbReference type="KEGG" id="ncr:NCU04584"/>
<dbReference type="VEuPathDB" id="FungiDB:NCU04584"/>
<dbReference type="HOGENOM" id="CLU_104273_0_1_1"/>
<dbReference type="InParanoid" id="Q872F4"/>
<dbReference type="OMA" id="NPFWELS"/>
<dbReference type="OrthoDB" id="2505440at2759"/>
<dbReference type="Proteomes" id="UP000001805">
    <property type="component" value="Chromosome 2, Linkage Group V"/>
</dbReference>
<dbReference type="GO" id="GO:0005634">
    <property type="term" value="C:nucleus"/>
    <property type="evidence" value="ECO:0000318"/>
    <property type="project" value="GO_Central"/>
</dbReference>
<dbReference type="GO" id="GO:0005667">
    <property type="term" value="C:transcription regulator complex"/>
    <property type="evidence" value="ECO:0000318"/>
    <property type="project" value="GO_Central"/>
</dbReference>
<dbReference type="GO" id="GO:0003677">
    <property type="term" value="F:DNA binding"/>
    <property type="evidence" value="ECO:0007669"/>
    <property type="project" value="UniProtKB-KW"/>
</dbReference>
<dbReference type="GO" id="GO:0003713">
    <property type="term" value="F:transcription coactivator activity"/>
    <property type="evidence" value="ECO:0000318"/>
    <property type="project" value="GO_Central"/>
</dbReference>
<dbReference type="GO" id="GO:0060261">
    <property type="term" value="P:positive regulation of transcription initiation by RNA polymerase II"/>
    <property type="evidence" value="ECO:0007669"/>
    <property type="project" value="InterPro"/>
</dbReference>
<dbReference type="FunFam" id="2.30.31.10:FF:000006">
    <property type="entry name" value="Putative RNA polymerase II transcriptional coactivator"/>
    <property type="match status" value="1"/>
</dbReference>
<dbReference type="Gene3D" id="2.30.31.10">
    <property type="entry name" value="Transcriptional Coactivator Pc4, Chain A"/>
    <property type="match status" value="1"/>
</dbReference>
<dbReference type="InterPro" id="IPR003173">
    <property type="entry name" value="PC4_C"/>
</dbReference>
<dbReference type="InterPro" id="IPR009044">
    <property type="entry name" value="ssDNA-bd_transcriptional_reg"/>
</dbReference>
<dbReference type="InterPro" id="IPR045125">
    <property type="entry name" value="Sub1/Tcp4-like"/>
</dbReference>
<dbReference type="PANTHER" id="PTHR13215">
    <property type="entry name" value="RNA POLYMERASE II TRANSCRIPTIONAL COACTIVATOR"/>
    <property type="match status" value="1"/>
</dbReference>
<dbReference type="Pfam" id="PF02229">
    <property type="entry name" value="PC4"/>
    <property type="match status" value="1"/>
</dbReference>
<dbReference type="SUPFAM" id="SSF54447">
    <property type="entry name" value="ssDNA-binding transcriptional regulator domain"/>
    <property type="match status" value="1"/>
</dbReference>
<feature type="chain" id="PRO_0000215949" description="Putative RNA polymerase II transcriptional coactivator">
    <location>
        <begin position="1"/>
        <end position="172"/>
    </location>
</feature>
<feature type="region of interest" description="Disordered" evidence="2">
    <location>
        <begin position="1"/>
        <end position="43"/>
    </location>
</feature>
<feature type="region of interest" description="Disordered" evidence="2">
    <location>
        <begin position="123"/>
        <end position="172"/>
    </location>
</feature>
<feature type="compositionally biased region" description="Polar residues" evidence="2">
    <location>
        <begin position="24"/>
        <end position="43"/>
    </location>
</feature>
<feature type="compositionally biased region" description="Basic and acidic residues" evidence="2">
    <location>
        <begin position="131"/>
        <end position="144"/>
    </location>
</feature>
<feature type="compositionally biased region" description="Acidic residues" evidence="2">
    <location>
        <begin position="158"/>
        <end position="172"/>
    </location>
</feature>
<accession>Q872F4</accession>
<accession>Q7S127</accession>
<proteinExistence type="inferred from homology"/>
<name>TCP4_NEUCR</name>
<comment type="function">
    <text evidence="1">General coactivator that functions cooperatively with TAFs and mediates functional interactions between upstream activators and the general transcriptional machinery. Binds single-stranded DNA (By similarity).</text>
</comment>
<comment type="subcellular location">
    <subcellularLocation>
        <location evidence="1">Nucleus</location>
    </subcellularLocation>
</comment>
<comment type="similarity">
    <text evidence="3">Belongs to the transcriptional coactivator PC4 family.</text>
</comment>
<sequence length="172" mass="19134">MPPKRRQAEDTSDAEPQYTKKSKGNTGKAQPQELTKGSDQDGNTFWELGNNRRISSSVFRNTTLVNIREYYDAGGKLMPGKKGISLSLAQYQNLLKVIPQLNADLRAQGHAIEDPGFAQVAEQTDAPIETPKVKALESNKESIKKEKKKPRKSNIDVTSDEEEAAEDEDDDE</sequence>
<reference key="1">
    <citation type="journal article" date="2003" name="Nucleic Acids Res.">
        <title>What's in the genome of a filamentous fungus? Analysis of the Neurospora genome sequence.</title>
        <authorList>
            <person name="Mannhaupt G."/>
            <person name="Montrone C."/>
            <person name="Haase D."/>
            <person name="Mewes H.-W."/>
            <person name="Aign V."/>
            <person name="Hoheisel J.D."/>
            <person name="Fartmann B."/>
            <person name="Nyakatura G."/>
            <person name="Kempken F."/>
            <person name="Maier J."/>
            <person name="Schulte U."/>
        </authorList>
    </citation>
    <scope>NUCLEOTIDE SEQUENCE [LARGE SCALE GENOMIC DNA]</scope>
    <source>
        <strain>ATCC 24698 / 74-OR23-1A / CBS 708.71 / DSM 1257 / FGSC 987</strain>
    </source>
</reference>
<reference key="2">
    <citation type="journal article" date="2003" name="Nature">
        <title>The genome sequence of the filamentous fungus Neurospora crassa.</title>
        <authorList>
            <person name="Galagan J.E."/>
            <person name="Calvo S.E."/>
            <person name="Borkovich K.A."/>
            <person name="Selker E.U."/>
            <person name="Read N.D."/>
            <person name="Jaffe D.B."/>
            <person name="FitzHugh W."/>
            <person name="Ma L.-J."/>
            <person name="Smirnov S."/>
            <person name="Purcell S."/>
            <person name="Rehman B."/>
            <person name="Elkins T."/>
            <person name="Engels R."/>
            <person name="Wang S."/>
            <person name="Nielsen C.B."/>
            <person name="Butler J."/>
            <person name="Endrizzi M."/>
            <person name="Qui D."/>
            <person name="Ianakiev P."/>
            <person name="Bell-Pedersen D."/>
            <person name="Nelson M.A."/>
            <person name="Werner-Washburne M."/>
            <person name="Selitrennikoff C.P."/>
            <person name="Kinsey J.A."/>
            <person name="Braun E.L."/>
            <person name="Zelter A."/>
            <person name="Schulte U."/>
            <person name="Kothe G.O."/>
            <person name="Jedd G."/>
            <person name="Mewes H.-W."/>
            <person name="Staben C."/>
            <person name="Marcotte E."/>
            <person name="Greenberg D."/>
            <person name="Roy A."/>
            <person name="Foley K."/>
            <person name="Naylor J."/>
            <person name="Stange-Thomann N."/>
            <person name="Barrett R."/>
            <person name="Gnerre S."/>
            <person name="Kamal M."/>
            <person name="Kamvysselis M."/>
            <person name="Mauceli E.W."/>
            <person name="Bielke C."/>
            <person name="Rudd S."/>
            <person name="Frishman D."/>
            <person name="Krystofova S."/>
            <person name="Rasmussen C."/>
            <person name="Metzenberg R.L."/>
            <person name="Perkins D.D."/>
            <person name="Kroken S."/>
            <person name="Cogoni C."/>
            <person name="Macino G."/>
            <person name="Catcheside D.E.A."/>
            <person name="Li W."/>
            <person name="Pratt R.J."/>
            <person name="Osmani S.A."/>
            <person name="DeSouza C.P.C."/>
            <person name="Glass N.L."/>
            <person name="Orbach M.J."/>
            <person name="Berglund J.A."/>
            <person name="Voelker R."/>
            <person name="Yarden O."/>
            <person name="Plamann M."/>
            <person name="Seiler S."/>
            <person name="Dunlap J.C."/>
            <person name="Radford A."/>
            <person name="Aramayo R."/>
            <person name="Natvig D.O."/>
            <person name="Alex L.A."/>
            <person name="Mannhaupt G."/>
            <person name="Ebbole D.J."/>
            <person name="Freitag M."/>
            <person name="Paulsen I."/>
            <person name="Sachs M.S."/>
            <person name="Lander E.S."/>
            <person name="Nusbaum C."/>
            <person name="Birren B.W."/>
        </authorList>
    </citation>
    <scope>NUCLEOTIDE SEQUENCE [LARGE SCALE GENOMIC DNA]</scope>
    <source>
        <strain>ATCC 24698 / 74-OR23-1A / CBS 708.71 / DSM 1257 / FGSC 987</strain>
    </source>
</reference>
<evidence type="ECO:0000250" key="1"/>
<evidence type="ECO:0000256" key="2">
    <source>
        <dbReference type="SAM" id="MobiDB-lite"/>
    </source>
</evidence>
<evidence type="ECO:0000305" key="3"/>
<organism>
    <name type="scientific">Neurospora crassa (strain ATCC 24698 / 74-OR23-1A / CBS 708.71 / DSM 1257 / FGSC 987)</name>
    <dbReference type="NCBI Taxonomy" id="367110"/>
    <lineage>
        <taxon>Eukaryota</taxon>
        <taxon>Fungi</taxon>
        <taxon>Dikarya</taxon>
        <taxon>Ascomycota</taxon>
        <taxon>Pezizomycotina</taxon>
        <taxon>Sordariomycetes</taxon>
        <taxon>Sordariomycetidae</taxon>
        <taxon>Sordariales</taxon>
        <taxon>Sordariaceae</taxon>
        <taxon>Neurospora</taxon>
    </lineage>
</organism>
<keyword id="KW-0010">Activator</keyword>
<keyword id="KW-0238">DNA-binding</keyword>
<keyword id="KW-0539">Nucleus</keyword>
<keyword id="KW-1185">Reference proteome</keyword>
<keyword id="KW-0804">Transcription</keyword>
<keyword id="KW-0805">Transcription regulation</keyword>